<protein>
    <recommendedName>
        <fullName>Uncharacterized membrane protein YDR090C</fullName>
    </recommendedName>
</protein>
<feature type="chain" id="PRO_0000244443" description="Uncharacterized membrane protein YDR090C">
    <location>
        <begin position="1"/>
        <end position="310"/>
    </location>
</feature>
<feature type="topological domain" description="Cytoplasmic" evidence="1">
    <location>
        <begin position="1"/>
        <end position="6"/>
    </location>
</feature>
<feature type="transmembrane region" description="Helical" evidence="1">
    <location>
        <begin position="7"/>
        <end position="27"/>
    </location>
</feature>
<feature type="topological domain" description="Extracellular" evidence="1">
    <location>
        <begin position="28"/>
        <end position="36"/>
    </location>
</feature>
<feature type="transmembrane region" description="Helical" evidence="1">
    <location>
        <begin position="37"/>
        <end position="57"/>
    </location>
</feature>
<feature type="topological domain" description="Cytoplasmic" evidence="1">
    <location>
        <begin position="58"/>
        <end position="61"/>
    </location>
</feature>
<feature type="transmembrane region" description="Helical" evidence="1">
    <location>
        <begin position="62"/>
        <end position="82"/>
    </location>
</feature>
<feature type="topological domain" description="Extracellular" evidence="1">
    <location>
        <begin position="83"/>
        <end position="96"/>
    </location>
</feature>
<feature type="transmembrane region" description="Helical" evidence="1">
    <location>
        <begin position="97"/>
        <end position="117"/>
    </location>
</feature>
<feature type="topological domain" description="Cytoplasmic" evidence="1">
    <location>
        <begin position="118"/>
        <end position="131"/>
    </location>
</feature>
<feature type="transmembrane region" description="Helical" evidence="1">
    <location>
        <begin position="132"/>
        <end position="152"/>
    </location>
</feature>
<feature type="topological domain" description="Extracellular" evidence="1">
    <location>
        <begin position="153"/>
        <end position="164"/>
    </location>
</feature>
<feature type="transmembrane region" description="Helical" evidence="1">
    <location>
        <begin position="165"/>
        <end position="185"/>
    </location>
</feature>
<feature type="topological domain" description="Cytoplasmic" evidence="1">
    <location>
        <begin position="186"/>
        <end position="191"/>
    </location>
</feature>
<feature type="transmembrane region" description="Helical" evidence="1">
    <location>
        <begin position="192"/>
        <end position="212"/>
    </location>
</feature>
<feature type="topological domain" description="Extracellular" evidence="1">
    <location>
        <begin position="213"/>
        <end position="310"/>
    </location>
</feature>
<feature type="domain" description="PQ-loop 1">
    <location>
        <begin position="5"/>
        <end position="69"/>
    </location>
</feature>
<feature type="domain" description="PQ-loop 2">
    <location>
        <begin position="138"/>
        <end position="194"/>
    </location>
</feature>
<feature type="modified residue" description="Phosphoserine" evidence="3 4">
    <location>
        <position position="229"/>
    </location>
</feature>
<feature type="glycosylation site" description="N-linked (GlcNAc...) asparagine" evidence="1">
    <location>
        <position position="251"/>
    </location>
</feature>
<feature type="glycosylation site" description="N-linked (GlcNAc...) asparagine" evidence="1">
    <location>
        <position position="259"/>
    </location>
</feature>
<sequence>MISEKAATALATIATVCWCVQLIPQIIYNWKKKDCTGLPPLMMFLWVVSGIPFAIYFCVSKGNVILQVQPHLFMFFCSISFVQSCYYPPISMARSKIVMIVAAIIAADVGMEVGFILWLRPLYEKGVKWPDLIFGISASVLLAVGLLPPYFELAKRKGRVIGINFAFLFIDSLGAWLSIISVILGNMDIMGIILYSIVAGMELGIFASHFIWWCRFRFLAKGNTFDEESGQAQKEEPDEKIEQDISKSDRNVTNYNLDNCSIPDDASSFADDFNIYDSTDGGTLSRAQTLHAVHGVVVRTDPDRYSRLSV</sequence>
<comment type="subcellular location">
    <subcellularLocation>
        <location evidence="2">Cell membrane</location>
        <topology evidence="2">Multi-pass membrane protein</topology>
    </subcellularLocation>
</comment>
<proteinExistence type="evidence at protein level"/>
<dbReference type="EMBL" id="Z50111">
    <property type="protein sequence ID" value="CAA90449.1"/>
    <property type="molecule type" value="Genomic_DNA"/>
</dbReference>
<dbReference type="EMBL" id="AY557688">
    <property type="protein sequence ID" value="AAS56014.1"/>
    <property type="molecule type" value="Genomic_DNA"/>
</dbReference>
<dbReference type="EMBL" id="BK006938">
    <property type="protein sequence ID" value="DAA11937.1"/>
    <property type="molecule type" value="Genomic_DNA"/>
</dbReference>
<dbReference type="PIR" id="S58090">
    <property type="entry name" value="S58090"/>
</dbReference>
<dbReference type="SMR" id="Q03193"/>
<dbReference type="BioGRID" id="32147">
    <property type="interactions" value="54"/>
</dbReference>
<dbReference type="IntAct" id="Q03193">
    <property type="interactions" value="6"/>
</dbReference>
<dbReference type="STRING" id="4932.YDR090C"/>
<dbReference type="GlyGen" id="Q03193">
    <property type="glycosylation" value="2 sites"/>
</dbReference>
<dbReference type="iPTMnet" id="Q03193"/>
<dbReference type="PaxDb" id="4932-YDR090C"/>
<dbReference type="PeptideAtlas" id="Q03193"/>
<dbReference type="EnsemblFungi" id="YDR090C_mRNA">
    <property type="protein sequence ID" value="YDR090C"/>
    <property type="gene ID" value="YDR090C"/>
</dbReference>
<dbReference type="KEGG" id="sce:YDR090C"/>
<dbReference type="AGR" id="SGD:S000002497"/>
<dbReference type="SGD" id="S000002497">
    <property type="gene designation" value="YDR090C"/>
</dbReference>
<dbReference type="VEuPathDB" id="FungiDB:YDR090C"/>
<dbReference type="eggNOG" id="KOG2913">
    <property type="taxonomic scope" value="Eukaryota"/>
</dbReference>
<dbReference type="HOGENOM" id="CLU_040201_4_0_1"/>
<dbReference type="InParanoid" id="Q03193"/>
<dbReference type="OMA" id="WRIRYRK"/>
<dbReference type="OrthoDB" id="407617at2759"/>
<dbReference type="BioCyc" id="YEAST:G3O-29695-MONOMER"/>
<dbReference type="BioGRID-ORCS" id="851664">
    <property type="hits" value="9 hits in 10 CRISPR screens"/>
</dbReference>
<dbReference type="PRO" id="PR:Q03193"/>
<dbReference type="Proteomes" id="UP000002311">
    <property type="component" value="Chromosome IV"/>
</dbReference>
<dbReference type="RNAct" id="Q03193">
    <property type="molecule type" value="protein"/>
</dbReference>
<dbReference type="GO" id="GO:0016020">
    <property type="term" value="C:membrane"/>
    <property type="evidence" value="ECO:0000318"/>
    <property type="project" value="GO_Central"/>
</dbReference>
<dbReference type="GO" id="GO:0005886">
    <property type="term" value="C:plasma membrane"/>
    <property type="evidence" value="ECO:0000314"/>
    <property type="project" value="SGD"/>
</dbReference>
<dbReference type="FunFam" id="1.20.1280.290:FF:000024">
    <property type="entry name" value="Putative membrane protein"/>
    <property type="match status" value="1"/>
</dbReference>
<dbReference type="Gene3D" id="1.20.1280.290">
    <property type="match status" value="1"/>
</dbReference>
<dbReference type="InterPro" id="IPR051415">
    <property type="entry name" value="LAAT-1"/>
</dbReference>
<dbReference type="InterPro" id="IPR006603">
    <property type="entry name" value="PQ-loop_rpt"/>
</dbReference>
<dbReference type="PANTHER" id="PTHR16201:SF37">
    <property type="entry name" value="PQ-LOOP REPEAT-CONTAINING PROTEIN"/>
    <property type="match status" value="1"/>
</dbReference>
<dbReference type="PANTHER" id="PTHR16201">
    <property type="entry name" value="SEVEN TRANSMEMBRANE PROTEIN 1-RELATED"/>
    <property type="match status" value="1"/>
</dbReference>
<dbReference type="Pfam" id="PF04193">
    <property type="entry name" value="PQ-loop"/>
    <property type="match status" value="1"/>
</dbReference>
<dbReference type="SMART" id="SM00679">
    <property type="entry name" value="CTNS"/>
    <property type="match status" value="2"/>
</dbReference>
<reference key="1">
    <citation type="journal article" date="1997" name="Nature">
        <title>The nucleotide sequence of Saccharomyces cerevisiae chromosome IV.</title>
        <authorList>
            <person name="Jacq C."/>
            <person name="Alt-Moerbe J."/>
            <person name="Andre B."/>
            <person name="Arnold W."/>
            <person name="Bahr A."/>
            <person name="Ballesta J.P.G."/>
            <person name="Bargues M."/>
            <person name="Baron L."/>
            <person name="Becker A."/>
            <person name="Biteau N."/>
            <person name="Bloecker H."/>
            <person name="Blugeon C."/>
            <person name="Boskovic J."/>
            <person name="Brandt P."/>
            <person name="Brueckner M."/>
            <person name="Buitrago M.J."/>
            <person name="Coster F."/>
            <person name="Delaveau T."/>
            <person name="del Rey F."/>
            <person name="Dujon B."/>
            <person name="Eide L.G."/>
            <person name="Garcia-Cantalejo J.M."/>
            <person name="Goffeau A."/>
            <person name="Gomez-Peris A."/>
            <person name="Granotier C."/>
            <person name="Hanemann V."/>
            <person name="Hankeln T."/>
            <person name="Hoheisel J.D."/>
            <person name="Jaeger W."/>
            <person name="Jimenez A."/>
            <person name="Jonniaux J.-L."/>
            <person name="Kraemer C."/>
            <person name="Kuester H."/>
            <person name="Laamanen P."/>
            <person name="Legros Y."/>
            <person name="Louis E.J."/>
            <person name="Moeller-Rieker S."/>
            <person name="Monnet A."/>
            <person name="Moro M."/>
            <person name="Mueller-Auer S."/>
            <person name="Nussbaumer B."/>
            <person name="Paricio N."/>
            <person name="Paulin L."/>
            <person name="Perea J."/>
            <person name="Perez-Alonso M."/>
            <person name="Perez-Ortin J.E."/>
            <person name="Pohl T.M."/>
            <person name="Prydz H."/>
            <person name="Purnelle B."/>
            <person name="Rasmussen S.W."/>
            <person name="Remacha M.A."/>
            <person name="Revuelta J.L."/>
            <person name="Rieger M."/>
            <person name="Salom D."/>
            <person name="Saluz H.P."/>
            <person name="Saiz J.E."/>
            <person name="Saren A.-M."/>
            <person name="Schaefer M."/>
            <person name="Scharfe M."/>
            <person name="Schmidt E.R."/>
            <person name="Schneider C."/>
            <person name="Scholler P."/>
            <person name="Schwarz S."/>
            <person name="Soler-Mira A."/>
            <person name="Urrestarazu L.A."/>
            <person name="Verhasselt P."/>
            <person name="Vissers S."/>
            <person name="Voet M."/>
            <person name="Volckaert G."/>
            <person name="Wagner G."/>
            <person name="Wambutt R."/>
            <person name="Wedler E."/>
            <person name="Wedler H."/>
            <person name="Woelfl S."/>
            <person name="Harris D.E."/>
            <person name="Bowman S."/>
            <person name="Brown D."/>
            <person name="Churcher C.M."/>
            <person name="Connor R."/>
            <person name="Dedman K."/>
            <person name="Gentles S."/>
            <person name="Hamlin N."/>
            <person name="Hunt S."/>
            <person name="Jones L."/>
            <person name="McDonald S."/>
            <person name="Murphy L.D."/>
            <person name="Niblett D."/>
            <person name="Odell C."/>
            <person name="Oliver K."/>
            <person name="Rajandream M.A."/>
            <person name="Richards C."/>
            <person name="Shore L."/>
            <person name="Walsh S.V."/>
            <person name="Barrell B.G."/>
            <person name="Dietrich F.S."/>
            <person name="Mulligan J.T."/>
            <person name="Allen E."/>
            <person name="Araujo R."/>
            <person name="Aviles E."/>
            <person name="Berno A."/>
            <person name="Carpenter J."/>
            <person name="Chen E."/>
            <person name="Cherry J.M."/>
            <person name="Chung E."/>
            <person name="Duncan M."/>
            <person name="Hunicke-Smith S."/>
            <person name="Hyman R.W."/>
            <person name="Komp C."/>
            <person name="Lashkari D."/>
            <person name="Lew H."/>
            <person name="Lin D."/>
            <person name="Mosedale D."/>
            <person name="Nakahara K."/>
            <person name="Namath A."/>
            <person name="Oefner P."/>
            <person name="Oh C."/>
            <person name="Petel F.X."/>
            <person name="Roberts D."/>
            <person name="Schramm S."/>
            <person name="Schroeder M."/>
            <person name="Shogren T."/>
            <person name="Shroff N."/>
            <person name="Winant A."/>
            <person name="Yelton M.A."/>
            <person name="Botstein D."/>
            <person name="Davis R.W."/>
            <person name="Johnston M."/>
            <person name="Andrews S."/>
            <person name="Brinkman R."/>
            <person name="Cooper J."/>
            <person name="Ding H."/>
            <person name="Du Z."/>
            <person name="Favello A."/>
            <person name="Fulton L."/>
            <person name="Gattung S."/>
            <person name="Greco T."/>
            <person name="Hallsworth K."/>
            <person name="Hawkins J."/>
            <person name="Hillier L.W."/>
            <person name="Jier M."/>
            <person name="Johnson D."/>
            <person name="Johnston L."/>
            <person name="Kirsten J."/>
            <person name="Kucaba T."/>
            <person name="Langston Y."/>
            <person name="Latreille P."/>
            <person name="Le T."/>
            <person name="Mardis E."/>
            <person name="Menezes S."/>
            <person name="Miller N."/>
            <person name="Nhan M."/>
            <person name="Pauley A."/>
            <person name="Peluso D."/>
            <person name="Rifkin L."/>
            <person name="Riles L."/>
            <person name="Taich A."/>
            <person name="Trevaskis E."/>
            <person name="Vignati D."/>
            <person name="Wilcox L."/>
            <person name="Wohldman P."/>
            <person name="Vaudin M."/>
            <person name="Wilson R."/>
            <person name="Waterston R."/>
            <person name="Albermann K."/>
            <person name="Hani J."/>
            <person name="Heumann K."/>
            <person name="Kleine K."/>
            <person name="Mewes H.-W."/>
            <person name="Zollner A."/>
            <person name="Zaccaria P."/>
        </authorList>
    </citation>
    <scope>NUCLEOTIDE SEQUENCE [LARGE SCALE GENOMIC DNA]</scope>
    <source>
        <strain>ATCC 204508 / S288c</strain>
    </source>
</reference>
<reference key="2">
    <citation type="journal article" date="2014" name="G3 (Bethesda)">
        <title>The reference genome sequence of Saccharomyces cerevisiae: Then and now.</title>
        <authorList>
            <person name="Engel S.R."/>
            <person name="Dietrich F.S."/>
            <person name="Fisk D.G."/>
            <person name="Binkley G."/>
            <person name="Balakrishnan R."/>
            <person name="Costanzo M.C."/>
            <person name="Dwight S.S."/>
            <person name="Hitz B.C."/>
            <person name="Karra K."/>
            <person name="Nash R.S."/>
            <person name="Weng S."/>
            <person name="Wong E.D."/>
            <person name="Lloyd P."/>
            <person name="Skrzypek M.S."/>
            <person name="Miyasato S.R."/>
            <person name="Simison M."/>
            <person name="Cherry J.M."/>
        </authorList>
    </citation>
    <scope>GENOME REANNOTATION</scope>
    <source>
        <strain>ATCC 204508 / S288c</strain>
    </source>
</reference>
<reference key="3">
    <citation type="journal article" date="2007" name="Genome Res.">
        <title>Approaching a complete repository of sequence-verified protein-encoding clones for Saccharomyces cerevisiae.</title>
        <authorList>
            <person name="Hu Y."/>
            <person name="Rolfs A."/>
            <person name="Bhullar B."/>
            <person name="Murthy T.V.S."/>
            <person name="Zhu C."/>
            <person name="Berger M.F."/>
            <person name="Camargo A.A."/>
            <person name="Kelley F."/>
            <person name="McCarron S."/>
            <person name="Jepson D."/>
            <person name="Richardson A."/>
            <person name="Raphael J."/>
            <person name="Moreira D."/>
            <person name="Taycher E."/>
            <person name="Zuo D."/>
            <person name="Mohr S."/>
            <person name="Kane M.F."/>
            <person name="Williamson J."/>
            <person name="Simpson A.J.G."/>
            <person name="Bulyk M.L."/>
            <person name="Harlow E."/>
            <person name="Marsischky G."/>
            <person name="Kolodner R.D."/>
            <person name="LaBaer J."/>
        </authorList>
    </citation>
    <scope>NUCLEOTIDE SEQUENCE [GENOMIC DNA]</scope>
    <source>
        <strain>ATCC 204508 / S288c</strain>
    </source>
</reference>
<reference key="4">
    <citation type="journal article" date="2003" name="J. Biol. Chem.">
        <title>Topology models for 37 Saccharomyces cerevisiae membrane proteins based on C-terminal reporter fusions and predictions.</title>
        <authorList>
            <person name="Kim H."/>
            <person name="Melen K."/>
            <person name="von Heijne G."/>
        </authorList>
    </citation>
    <scope>TOPOLOGY</scope>
</reference>
<reference key="5">
    <citation type="journal article" date="2003" name="Nature">
        <title>Global analysis of protein localization in budding yeast.</title>
        <authorList>
            <person name="Huh W.-K."/>
            <person name="Falvo J.V."/>
            <person name="Gerke L.C."/>
            <person name="Carroll A.S."/>
            <person name="Howson R.W."/>
            <person name="Weissman J.S."/>
            <person name="O'Shea E.K."/>
        </authorList>
    </citation>
    <scope>SUBCELLULAR LOCATION [LARGE SCALE ANALYSIS]</scope>
</reference>
<reference key="6">
    <citation type="journal article" date="2006" name="Proc. Natl. Acad. Sci. U.S.A.">
        <title>A global topology map of the Saccharomyces cerevisiae membrane proteome.</title>
        <authorList>
            <person name="Kim H."/>
            <person name="Melen K."/>
            <person name="Oesterberg M."/>
            <person name="von Heijne G."/>
        </authorList>
    </citation>
    <scope>TOPOLOGY [LARGE SCALE ANALYSIS]</scope>
    <source>
        <strain>ATCC 208353 / W303-1A</strain>
    </source>
</reference>
<reference key="7">
    <citation type="journal article" date="2007" name="J. Proteome Res.">
        <title>Large-scale phosphorylation analysis of alpha-factor-arrested Saccharomyces cerevisiae.</title>
        <authorList>
            <person name="Li X."/>
            <person name="Gerber S.A."/>
            <person name="Rudner A.D."/>
            <person name="Beausoleil S.A."/>
            <person name="Haas W."/>
            <person name="Villen J."/>
            <person name="Elias J.E."/>
            <person name="Gygi S.P."/>
        </authorList>
    </citation>
    <scope>PHOSPHORYLATION [LARGE SCALE ANALYSIS] AT SER-229</scope>
    <scope>IDENTIFICATION BY MASS SPECTROMETRY [LARGE SCALE ANALYSIS]</scope>
    <source>
        <strain>ADR376</strain>
    </source>
</reference>
<reference key="8">
    <citation type="journal article" date="2009" name="Science">
        <title>Global analysis of Cdk1 substrate phosphorylation sites provides insights into evolution.</title>
        <authorList>
            <person name="Holt L.J."/>
            <person name="Tuch B.B."/>
            <person name="Villen J."/>
            <person name="Johnson A.D."/>
            <person name="Gygi S.P."/>
            <person name="Morgan D.O."/>
        </authorList>
    </citation>
    <scope>PHOSPHORYLATION [LARGE SCALE ANALYSIS] AT SER-229</scope>
    <scope>IDENTIFICATION BY MASS SPECTROMETRY [LARGE SCALE ANALYSIS]</scope>
</reference>
<evidence type="ECO:0000255" key="1"/>
<evidence type="ECO:0000269" key="2">
    <source>
    </source>
</evidence>
<evidence type="ECO:0007744" key="3">
    <source>
    </source>
</evidence>
<evidence type="ECO:0007744" key="4">
    <source>
    </source>
</evidence>
<gene>
    <name type="ordered locus">YDR090C</name>
</gene>
<accession>Q03193</accession>
<accession>D6VS77</accession>
<organism>
    <name type="scientific">Saccharomyces cerevisiae (strain ATCC 204508 / S288c)</name>
    <name type="common">Baker's yeast</name>
    <dbReference type="NCBI Taxonomy" id="559292"/>
    <lineage>
        <taxon>Eukaryota</taxon>
        <taxon>Fungi</taxon>
        <taxon>Dikarya</taxon>
        <taxon>Ascomycota</taxon>
        <taxon>Saccharomycotina</taxon>
        <taxon>Saccharomycetes</taxon>
        <taxon>Saccharomycetales</taxon>
        <taxon>Saccharomycetaceae</taxon>
        <taxon>Saccharomyces</taxon>
    </lineage>
</organism>
<keyword id="KW-1003">Cell membrane</keyword>
<keyword id="KW-0325">Glycoprotein</keyword>
<keyword id="KW-0472">Membrane</keyword>
<keyword id="KW-0597">Phosphoprotein</keyword>
<keyword id="KW-1185">Reference proteome</keyword>
<keyword id="KW-0677">Repeat</keyword>
<keyword id="KW-0812">Transmembrane</keyword>
<keyword id="KW-1133">Transmembrane helix</keyword>
<name>YD090_YEAST</name>